<dbReference type="EMBL" id="BC092623">
    <property type="protein sequence ID" value="AAH92623.1"/>
    <property type="molecule type" value="mRNA"/>
</dbReference>
<dbReference type="RefSeq" id="NP_001015026.1">
    <property type="nucleotide sequence ID" value="NM_001015026.1"/>
</dbReference>
<dbReference type="RefSeq" id="XP_008761006.1">
    <property type="nucleotide sequence ID" value="XM_008762784.1"/>
</dbReference>
<dbReference type="RefSeq" id="XP_008761008.1">
    <property type="nucleotide sequence ID" value="XM_008762786.2"/>
</dbReference>
<dbReference type="RefSeq" id="XP_008761009.1">
    <property type="nucleotide sequence ID" value="XM_008762787.2"/>
</dbReference>
<dbReference type="RefSeq" id="XP_008761010.1">
    <property type="nucleotide sequence ID" value="XM_008762788.4"/>
</dbReference>
<dbReference type="SMR" id="Q569A2"/>
<dbReference type="FunCoup" id="Q569A2">
    <property type="interactions" value="156"/>
</dbReference>
<dbReference type="STRING" id="10116.ENSRNOP00000072130"/>
<dbReference type="iPTMnet" id="Q569A2"/>
<dbReference type="PhosphoSitePlus" id="Q569A2"/>
<dbReference type="PaxDb" id="10116-ENSRNOP00000007020"/>
<dbReference type="Ensembl" id="ENSRNOT00000083938.2">
    <property type="protein sequence ID" value="ENSRNOP00000072130.1"/>
    <property type="gene ID" value="ENSRNOG00000059016.2"/>
</dbReference>
<dbReference type="GeneID" id="362326"/>
<dbReference type="KEGG" id="rno:362326"/>
<dbReference type="UCSC" id="RGD:1311102">
    <property type="organism name" value="rat"/>
</dbReference>
<dbReference type="AGR" id="RGD:1311102"/>
<dbReference type="CTD" id="23554"/>
<dbReference type="RGD" id="1311102">
    <property type="gene designation" value="Tspan12"/>
</dbReference>
<dbReference type="eggNOG" id="KOG3882">
    <property type="taxonomic scope" value="Eukaryota"/>
</dbReference>
<dbReference type="GeneTree" id="ENSGT00510000047764"/>
<dbReference type="HOGENOM" id="CLU_055524_1_0_1"/>
<dbReference type="InParanoid" id="Q569A2"/>
<dbReference type="OMA" id="CARHAHF"/>
<dbReference type="OrthoDB" id="8813994at2759"/>
<dbReference type="PhylomeDB" id="Q569A2"/>
<dbReference type="TreeFam" id="TF316345"/>
<dbReference type="PRO" id="PR:Q569A2"/>
<dbReference type="Proteomes" id="UP000002494">
    <property type="component" value="Chromosome 4"/>
</dbReference>
<dbReference type="Bgee" id="ENSRNOG00000059016">
    <property type="expression patterns" value="Expressed in stomach and 19 other cell types or tissues"/>
</dbReference>
<dbReference type="GO" id="GO:0005886">
    <property type="term" value="C:plasma membrane"/>
    <property type="evidence" value="ECO:0000250"/>
    <property type="project" value="UniProtKB"/>
</dbReference>
<dbReference type="GO" id="GO:0001525">
    <property type="term" value="P:angiogenesis"/>
    <property type="evidence" value="ECO:0007669"/>
    <property type="project" value="UniProtKB-KW"/>
</dbReference>
<dbReference type="GO" id="GO:0007166">
    <property type="term" value="P:cell surface receptor signaling pathway"/>
    <property type="evidence" value="ECO:0000250"/>
    <property type="project" value="UniProtKB"/>
</dbReference>
<dbReference type="GO" id="GO:0035633">
    <property type="term" value="P:maintenance of blood-brain barrier"/>
    <property type="evidence" value="ECO:0000266"/>
    <property type="project" value="RGD"/>
</dbReference>
<dbReference type="GO" id="GO:0110135">
    <property type="term" value="P:Norrin signaling pathway"/>
    <property type="evidence" value="ECO:0000266"/>
    <property type="project" value="RGD"/>
</dbReference>
<dbReference type="GO" id="GO:0045765">
    <property type="term" value="P:regulation of angiogenesis"/>
    <property type="evidence" value="ECO:0000250"/>
    <property type="project" value="UniProtKB"/>
</dbReference>
<dbReference type="GO" id="GO:0010842">
    <property type="term" value="P:retina layer formation"/>
    <property type="evidence" value="ECO:0000250"/>
    <property type="project" value="UniProtKB"/>
</dbReference>
<dbReference type="CDD" id="cd03157">
    <property type="entry name" value="TM4SF12_like_LEL"/>
    <property type="match status" value="1"/>
</dbReference>
<dbReference type="FunFam" id="1.10.1450.10:FF:000009">
    <property type="entry name" value="Tetraspanin"/>
    <property type="match status" value="1"/>
</dbReference>
<dbReference type="Gene3D" id="1.10.1450.10">
    <property type="entry name" value="Tetraspanin"/>
    <property type="match status" value="1"/>
</dbReference>
<dbReference type="InterPro" id="IPR018499">
    <property type="entry name" value="Tetraspanin/Peripherin"/>
</dbReference>
<dbReference type="InterPro" id="IPR000301">
    <property type="entry name" value="Tetraspanin_animals"/>
</dbReference>
<dbReference type="InterPro" id="IPR018503">
    <property type="entry name" value="Tetraspanin_CS"/>
</dbReference>
<dbReference type="InterPro" id="IPR008952">
    <property type="entry name" value="Tetraspanin_EC2_sf"/>
</dbReference>
<dbReference type="PANTHER" id="PTHR19282">
    <property type="entry name" value="TETRASPANIN"/>
    <property type="match status" value="1"/>
</dbReference>
<dbReference type="PANTHER" id="PTHR19282:SF462">
    <property type="entry name" value="TETRASPANIN-12"/>
    <property type="match status" value="1"/>
</dbReference>
<dbReference type="Pfam" id="PF00335">
    <property type="entry name" value="Tetraspanin"/>
    <property type="match status" value="1"/>
</dbReference>
<dbReference type="PIRSF" id="PIRSF002419">
    <property type="entry name" value="Tetraspanin"/>
    <property type="match status" value="1"/>
</dbReference>
<dbReference type="PRINTS" id="PR00259">
    <property type="entry name" value="TMFOUR"/>
</dbReference>
<dbReference type="SUPFAM" id="SSF48652">
    <property type="entry name" value="Tetraspanin"/>
    <property type="match status" value="1"/>
</dbReference>
<dbReference type="PROSITE" id="PS00421">
    <property type="entry name" value="TM4_1"/>
    <property type="match status" value="1"/>
</dbReference>
<name>TSN12_RAT</name>
<reference key="1">
    <citation type="journal article" date="2004" name="Genome Res.">
        <title>The status, quality, and expansion of the NIH full-length cDNA project: the Mammalian Gene Collection (MGC).</title>
        <authorList>
            <consortium name="The MGC Project Team"/>
        </authorList>
    </citation>
    <scope>NUCLEOTIDE SEQUENCE [LARGE SCALE MRNA]</scope>
    <source>
        <tissue>Brain</tissue>
    </source>
</reference>
<organism>
    <name type="scientific">Rattus norvegicus</name>
    <name type="common">Rat</name>
    <dbReference type="NCBI Taxonomy" id="10116"/>
    <lineage>
        <taxon>Eukaryota</taxon>
        <taxon>Metazoa</taxon>
        <taxon>Chordata</taxon>
        <taxon>Craniata</taxon>
        <taxon>Vertebrata</taxon>
        <taxon>Euteleostomi</taxon>
        <taxon>Mammalia</taxon>
        <taxon>Eutheria</taxon>
        <taxon>Euarchontoglires</taxon>
        <taxon>Glires</taxon>
        <taxon>Rodentia</taxon>
        <taxon>Myomorpha</taxon>
        <taxon>Muroidea</taxon>
        <taxon>Muridae</taxon>
        <taxon>Murinae</taxon>
        <taxon>Rattus</taxon>
    </lineage>
</organism>
<gene>
    <name type="primary">Tspan12</name>
    <name type="synonym">Tm4sf12</name>
</gene>
<comment type="function">
    <text evidence="1">Regulator of cell surface receptor signal transduction. Plays a central role in retinal vascularization by regulating norrin (NDP) signal transduction. Acts in concert with norrin (NDP) to promote FZD4 multimerization and subsequent activation of FZD4, leading to promote accumulation of beta-catenin (CTNNB1) and stimulate LEF/TCF-mediated transcriptional programs. Suprisingly, it only activates the norrin (NDP)-dependent activation of FZD4, while it does not activate the Wnt-dependent activation of FZD4, suggesting the existence of a Wnt-independent signaling that also promote accumulation the beta-catenin (CTNNB1). Acts as a regulator of membrane proteinases such as ADAM10 and MMP14/MT1-MMP. Activates ADAM10-dependent cleavage activity of amyloid precursor protein (APP). Activates MMP14/MT1-MMP-dependent cleavage activity (By similarity).</text>
</comment>
<comment type="subunit">
    <text evidence="1">Component of a complex, at least composed of TSPAN12, FZD4 and norrin (NDP) (By similarity). Interacts (when palmitoylated) with ADAM10. Interacts with MMP14/MT1-MMP (By similarity).</text>
</comment>
<comment type="subcellular location">
    <subcellularLocation>
        <location evidence="1">Cell membrane</location>
        <topology evidence="1">Multi-pass membrane protein</topology>
    </subcellularLocation>
</comment>
<comment type="PTM">
    <text evidence="1">Palmitoylated; required for interaction with ADAM10. The precise position of palmitoylated residues is unclear and occurs either on Cys-9, Cys-12 and/or Cys-83 (By similarity).</text>
</comment>
<comment type="similarity">
    <text evidence="3">Belongs to the tetraspanin (TM4SF) family.</text>
</comment>
<proteinExistence type="evidence at transcript level"/>
<accession>Q569A2</accession>
<keyword id="KW-0037">Angiogenesis</keyword>
<keyword id="KW-1003">Cell membrane</keyword>
<keyword id="KW-0449">Lipoprotein</keyword>
<keyword id="KW-0472">Membrane</keyword>
<keyword id="KW-0564">Palmitate</keyword>
<keyword id="KW-1185">Reference proteome</keyword>
<keyword id="KW-0812">Transmembrane</keyword>
<keyword id="KW-1133">Transmembrane helix</keyword>
<sequence length="305" mass="35378">MAREDSVKCLRCLLYALNLLFWLMSISVLAVSAWMRDYLNNVLTLTAETRVEEAVILTYFPVVHPVMIAVCCFLIIVGMLGYCGTVKRNLLLLAWYFGTLLVIFCVELACGVWTYEQEVMVPVQWSDMVTLKARMTNYGLPRYRWLTHAWNYFQREFKCCGVVYFTDWLEMTEMDWPPDSCCVREFPGCSKQAHQEDLSDLYQEGCGKKMYSFLRGTKQLQVLRFLGISIGVTQILAMILTITLLWALYYDRREPGTDQMLSLKNDASQHLSCHSVELLKPSLSRIFEHTSMANSFNTHFEMEEL</sequence>
<protein>
    <recommendedName>
        <fullName>Tetraspanin-12</fullName>
        <shortName>Tspan-12</shortName>
    </recommendedName>
    <alternativeName>
        <fullName>Transmembrane 4 superfamily member 12</fullName>
    </alternativeName>
</protein>
<evidence type="ECO:0000250" key="1"/>
<evidence type="ECO:0000255" key="2"/>
<evidence type="ECO:0000305" key="3"/>
<feature type="chain" id="PRO_0000294074" description="Tetraspanin-12">
    <location>
        <begin position="1"/>
        <end position="305"/>
    </location>
</feature>
<feature type="topological domain" description="Cytoplasmic" evidence="2">
    <location>
        <begin position="1"/>
        <end position="12"/>
    </location>
</feature>
<feature type="transmembrane region" description="Helical" evidence="2">
    <location>
        <begin position="13"/>
        <end position="33"/>
    </location>
</feature>
<feature type="topological domain" description="Extracellular" evidence="2">
    <location>
        <begin position="34"/>
        <end position="59"/>
    </location>
</feature>
<feature type="transmembrane region" description="Helical" evidence="2">
    <location>
        <begin position="60"/>
        <end position="80"/>
    </location>
</feature>
<feature type="transmembrane region" description="Helical" evidence="2">
    <location>
        <begin position="90"/>
        <end position="110"/>
    </location>
</feature>
<feature type="topological domain" description="Extracellular" evidence="2">
    <location>
        <begin position="111"/>
        <end position="224"/>
    </location>
</feature>
<feature type="transmembrane region" description="Helical" evidence="2">
    <location>
        <begin position="225"/>
        <end position="245"/>
    </location>
</feature>
<feature type="topological domain" description="Cytoplasmic" evidence="2">
    <location>
        <begin position="246"/>
        <end position="305"/>
    </location>
</feature>
<feature type="lipid moiety-binding region" description="S-palmitoyl cysteine" evidence="1">
    <location>
        <position position="9"/>
    </location>
</feature>
<feature type="lipid moiety-binding region" description="S-palmitoyl cysteine" evidence="1">
    <location>
        <position position="12"/>
    </location>
</feature>
<feature type="lipid moiety-binding region" description="S-palmitoyl cysteine" evidence="1">
    <location>
        <position position="83"/>
    </location>
</feature>